<evidence type="ECO:0000250" key="1"/>
<evidence type="ECO:0000250" key="2">
    <source>
        <dbReference type="UniProtKB" id="P78310"/>
    </source>
</evidence>
<evidence type="ECO:0000250" key="3">
    <source>
        <dbReference type="UniProtKB" id="P97792"/>
    </source>
</evidence>
<evidence type="ECO:0000255" key="4"/>
<evidence type="ECO:0000255" key="5">
    <source>
        <dbReference type="PROSITE-ProRule" id="PRU00114"/>
    </source>
</evidence>
<evidence type="ECO:0000256" key="6">
    <source>
        <dbReference type="SAM" id="MobiDB-lite"/>
    </source>
</evidence>
<evidence type="ECO:0000269" key="7">
    <source>
    </source>
</evidence>
<evidence type="ECO:0000305" key="8"/>
<evidence type="ECO:0007744" key="9">
    <source>
    </source>
</evidence>
<accession>Q9R066</accession>
<accession>Q5M817</accession>
<accession>Q9R067</accession>
<feature type="signal peptide" evidence="4">
    <location>
        <begin position="1"/>
        <end position="19"/>
    </location>
</feature>
<feature type="chain" id="PRO_0000014742" description="Coxsackievirus and adenovirus receptor homolog">
    <location>
        <begin position="20"/>
        <end position="365"/>
    </location>
</feature>
<feature type="topological domain" description="Extracellular" evidence="4">
    <location>
        <begin position="20"/>
        <end position="238"/>
    </location>
</feature>
<feature type="transmembrane region" description="Helical" evidence="4">
    <location>
        <begin position="239"/>
        <end position="259"/>
    </location>
</feature>
<feature type="topological domain" description="Cytoplasmic" evidence="4">
    <location>
        <begin position="260"/>
        <end position="365"/>
    </location>
</feature>
<feature type="domain" description="Ig-like C2-type 1">
    <location>
        <begin position="20"/>
        <end position="136"/>
    </location>
</feature>
<feature type="domain" description="Ig-like C2-type 2">
    <location>
        <begin position="141"/>
        <end position="228"/>
    </location>
</feature>
<feature type="region of interest" description="Disordered" evidence="6">
    <location>
        <begin position="269"/>
        <end position="315"/>
    </location>
</feature>
<feature type="short sequence motif" description="PDZ-binding" evidence="1">
    <location>
        <begin position="360"/>
        <end position="365"/>
    </location>
</feature>
<feature type="compositionally biased region" description="Basic and acidic residues" evidence="6">
    <location>
        <begin position="269"/>
        <end position="282"/>
    </location>
</feature>
<feature type="compositionally biased region" description="Polar residues" evidence="6">
    <location>
        <begin position="286"/>
        <end position="315"/>
    </location>
</feature>
<feature type="modified residue" description="Phosphoserine" evidence="3">
    <location>
        <position position="297"/>
    </location>
</feature>
<feature type="modified residue" description="Phosphoserine" evidence="3">
    <location>
        <position position="304"/>
    </location>
</feature>
<feature type="modified residue" description="Phosphoserine" evidence="2">
    <location>
        <position position="306"/>
    </location>
</feature>
<feature type="modified residue" description="Phosphoserine" evidence="9">
    <location>
        <position position="323"/>
    </location>
</feature>
<feature type="modified residue" description="Phosphoserine" evidence="9">
    <location>
        <position position="332"/>
    </location>
</feature>
<feature type="modified residue" description="Phosphoserine" evidence="3">
    <location>
        <position position="363"/>
    </location>
</feature>
<feature type="lipid moiety-binding region" description="S-palmitoyl cysteine" evidence="1">
    <location>
        <position position="259"/>
    </location>
</feature>
<feature type="lipid moiety-binding region" description="S-palmitoyl cysteine" evidence="1">
    <location>
        <position position="260"/>
    </location>
</feature>
<feature type="glycosylation site" description="N-linked (GlcNAc...) asparagine" evidence="4">
    <location>
        <position position="106"/>
    </location>
</feature>
<feature type="disulfide bond" evidence="5">
    <location>
        <begin position="41"/>
        <end position="120"/>
    </location>
</feature>
<feature type="disulfide bond" evidence="5">
    <location>
        <begin position="146"/>
        <end position="223"/>
    </location>
</feature>
<feature type="disulfide bond" evidence="5">
    <location>
        <begin position="162"/>
        <end position="212"/>
    </location>
</feature>
<feature type="splice variant" id="VSP_014815" description="In isoform 2." evidence="8">
    <original>VAAPNLSRMGAVP</original>
    <variation>FKYAYLTDGIAVV</variation>
    <location>
        <begin position="340"/>
        <end position="352"/>
    </location>
</feature>
<feature type="splice variant" id="VSP_014816" description="In isoform 2." evidence="8">
    <location>
        <begin position="353"/>
        <end position="365"/>
    </location>
</feature>
<gene>
    <name type="primary">Cxadr</name>
    <name type="synonym">Car</name>
</gene>
<dbReference type="EMBL" id="AABR03078554">
    <property type="status" value="NOT_ANNOTATED_CDS"/>
    <property type="molecule type" value="Genomic_DNA"/>
</dbReference>
<dbReference type="EMBL" id="AABR03079390">
    <property type="status" value="NOT_ANNOTATED_CDS"/>
    <property type="molecule type" value="Genomic_DNA"/>
</dbReference>
<dbReference type="EMBL" id="AF109643">
    <property type="protein sequence ID" value="AAF01254.1"/>
    <property type="molecule type" value="mRNA"/>
</dbReference>
<dbReference type="EMBL" id="AF109644">
    <property type="protein sequence ID" value="AAF01255.1"/>
    <property type="molecule type" value="mRNA"/>
</dbReference>
<dbReference type="EMBL" id="BC088313">
    <property type="protein sequence ID" value="AAH88313.1"/>
    <property type="molecule type" value="mRNA"/>
</dbReference>
<dbReference type="RefSeq" id="NP_001386136.1">
    <molecule id="Q9R066-1"/>
    <property type="nucleotide sequence ID" value="NM_001399207.1"/>
</dbReference>
<dbReference type="RefSeq" id="NP_446022.1">
    <molecule id="Q9R066-2"/>
    <property type="nucleotide sequence ID" value="NM_053570.2"/>
</dbReference>
<dbReference type="RefSeq" id="XP_006248062.1">
    <property type="nucleotide sequence ID" value="XM_006248000.3"/>
</dbReference>
<dbReference type="SMR" id="Q9R066"/>
<dbReference type="FunCoup" id="Q9R066">
    <property type="interactions" value="2253"/>
</dbReference>
<dbReference type="STRING" id="10116.ENSRNOP00000041873"/>
<dbReference type="GlyCosmos" id="Q9R066">
    <property type="glycosylation" value="1 site, No reported glycans"/>
</dbReference>
<dbReference type="GlyGen" id="Q9R066">
    <property type="glycosylation" value="1 site"/>
</dbReference>
<dbReference type="iPTMnet" id="Q9R066"/>
<dbReference type="PhosphoSitePlus" id="Q9R066"/>
<dbReference type="SwissPalm" id="Q9R066"/>
<dbReference type="PaxDb" id="10116-ENSRNOP00000041873"/>
<dbReference type="Ensembl" id="ENSRNOT00000050701.4">
    <molecule id="Q9R066-2"/>
    <property type="protein sequence ID" value="ENSRNOP00000041873.3"/>
    <property type="gene ID" value="ENSRNOG00000001557.6"/>
</dbReference>
<dbReference type="GeneID" id="89843"/>
<dbReference type="KEGG" id="rno:89843"/>
<dbReference type="UCSC" id="RGD:619794">
    <molecule id="Q9R066-1"/>
    <property type="organism name" value="rat"/>
</dbReference>
<dbReference type="AGR" id="RGD:619794"/>
<dbReference type="CTD" id="1525"/>
<dbReference type="RGD" id="619794">
    <property type="gene designation" value="Cxadr"/>
</dbReference>
<dbReference type="VEuPathDB" id="HostDB:ENSRNOG00000001557"/>
<dbReference type="eggNOG" id="ENOG502QSG0">
    <property type="taxonomic scope" value="Eukaryota"/>
</dbReference>
<dbReference type="GeneTree" id="ENSGT00940000154829"/>
<dbReference type="HOGENOM" id="CLU_040549_0_0_1"/>
<dbReference type="InParanoid" id="Q9R066"/>
<dbReference type="OMA" id="GTKPMQY"/>
<dbReference type="OrthoDB" id="8902063at2759"/>
<dbReference type="PhylomeDB" id="Q9R066"/>
<dbReference type="TreeFam" id="TF330875"/>
<dbReference type="Reactome" id="R-RNO-198933">
    <property type="pathway name" value="Immunoregulatory interactions between a Lymphoid and a non-Lymphoid cell"/>
</dbReference>
<dbReference type="Reactome" id="R-RNO-202733">
    <property type="pathway name" value="Cell surface interactions at the vascular wall"/>
</dbReference>
<dbReference type="PRO" id="PR:Q9R066"/>
<dbReference type="Proteomes" id="UP000002494">
    <property type="component" value="Chromosome 11"/>
</dbReference>
<dbReference type="Bgee" id="ENSRNOG00000001557">
    <property type="expression patterns" value="Expressed in jejunum and 18 other cell types or tissues"/>
</dbReference>
<dbReference type="GO" id="GO:0001669">
    <property type="term" value="C:acrosomal vesicle"/>
    <property type="evidence" value="ECO:0000250"/>
    <property type="project" value="UniProtKB"/>
</dbReference>
<dbReference type="GO" id="GO:0005912">
    <property type="term" value="C:adherens junction"/>
    <property type="evidence" value="ECO:0000250"/>
    <property type="project" value="UniProtKB"/>
</dbReference>
<dbReference type="GO" id="GO:0016327">
    <property type="term" value="C:apicolateral plasma membrane"/>
    <property type="evidence" value="ECO:0000250"/>
    <property type="project" value="UniProtKB"/>
</dbReference>
<dbReference type="GO" id="GO:0016323">
    <property type="term" value="C:basolateral plasma membrane"/>
    <property type="evidence" value="ECO:0000266"/>
    <property type="project" value="RGD"/>
</dbReference>
<dbReference type="GO" id="GO:0005923">
    <property type="term" value="C:bicellular tight junction"/>
    <property type="evidence" value="ECO:0000314"/>
    <property type="project" value="UniProtKB"/>
</dbReference>
<dbReference type="GO" id="GO:0044297">
    <property type="term" value="C:cell body"/>
    <property type="evidence" value="ECO:0000250"/>
    <property type="project" value="UniProtKB"/>
</dbReference>
<dbReference type="GO" id="GO:0005911">
    <property type="term" value="C:cell-cell junction"/>
    <property type="evidence" value="ECO:0000266"/>
    <property type="project" value="RGD"/>
</dbReference>
<dbReference type="GO" id="GO:0005737">
    <property type="term" value="C:cytoplasm"/>
    <property type="evidence" value="ECO:0000250"/>
    <property type="project" value="UniProtKB"/>
</dbReference>
<dbReference type="GO" id="GO:0005615">
    <property type="term" value="C:extracellular space"/>
    <property type="evidence" value="ECO:0000266"/>
    <property type="project" value="RGD"/>
</dbReference>
<dbReference type="GO" id="GO:0030175">
    <property type="term" value="C:filopodium"/>
    <property type="evidence" value="ECO:0000250"/>
    <property type="project" value="UniProtKB"/>
</dbReference>
<dbReference type="GO" id="GO:0098982">
    <property type="term" value="C:GABA-ergic synapse"/>
    <property type="evidence" value="ECO:0000266"/>
    <property type="project" value="RGD"/>
</dbReference>
<dbReference type="GO" id="GO:0098978">
    <property type="term" value="C:glutamatergic synapse"/>
    <property type="evidence" value="ECO:0000266"/>
    <property type="project" value="RGD"/>
</dbReference>
<dbReference type="GO" id="GO:0030426">
    <property type="term" value="C:growth cone"/>
    <property type="evidence" value="ECO:0000250"/>
    <property type="project" value="UniProtKB"/>
</dbReference>
<dbReference type="GO" id="GO:0014704">
    <property type="term" value="C:intercalated disc"/>
    <property type="evidence" value="ECO:0000266"/>
    <property type="project" value="RGD"/>
</dbReference>
<dbReference type="GO" id="GO:0045121">
    <property type="term" value="C:membrane raft"/>
    <property type="evidence" value="ECO:0000250"/>
    <property type="project" value="UniProtKB"/>
</dbReference>
<dbReference type="GO" id="GO:0043005">
    <property type="term" value="C:neuron projection"/>
    <property type="evidence" value="ECO:0000314"/>
    <property type="project" value="UniProtKB"/>
</dbReference>
<dbReference type="GO" id="GO:0005634">
    <property type="term" value="C:nucleus"/>
    <property type="evidence" value="ECO:0000250"/>
    <property type="project" value="UniProtKB"/>
</dbReference>
<dbReference type="GO" id="GO:0005886">
    <property type="term" value="C:plasma membrane"/>
    <property type="evidence" value="ECO:0000250"/>
    <property type="project" value="UniProtKB"/>
</dbReference>
<dbReference type="GO" id="GO:0042734">
    <property type="term" value="C:presynaptic membrane"/>
    <property type="evidence" value="ECO:0000266"/>
    <property type="project" value="RGD"/>
</dbReference>
<dbReference type="GO" id="GO:0032991">
    <property type="term" value="C:protein-containing complex"/>
    <property type="evidence" value="ECO:0000266"/>
    <property type="project" value="RGD"/>
</dbReference>
<dbReference type="GO" id="GO:0008013">
    <property type="term" value="F:beta-catenin binding"/>
    <property type="evidence" value="ECO:0000250"/>
    <property type="project" value="UniProtKB"/>
</dbReference>
<dbReference type="GO" id="GO:0050839">
    <property type="term" value="F:cell adhesion molecule binding"/>
    <property type="evidence" value="ECO:0000250"/>
    <property type="project" value="UniProtKB"/>
</dbReference>
<dbReference type="GO" id="GO:0071253">
    <property type="term" value="F:connexin binding"/>
    <property type="evidence" value="ECO:0000250"/>
    <property type="project" value="UniProtKB"/>
</dbReference>
<dbReference type="GO" id="GO:0005178">
    <property type="term" value="F:integrin binding"/>
    <property type="evidence" value="ECO:0000266"/>
    <property type="project" value="RGD"/>
</dbReference>
<dbReference type="GO" id="GO:0030165">
    <property type="term" value="F:PDZ domain binding"/>
    <property type="evidence" value="ECO:0000250"/>
    <property type="project" value="UniProtKB"/>
</dbReference>
<dbReference type="GO" id="GO:0005102">
    <property type="term" value="F:signaling receptor binding"/>
    <property type="evidence" value="ECO:0000266"/>
    <property type="project" value="RGD"/>
</dbReference>
<dbReference type="GO" id="GO:0030036">
    <property type="term" value="P:actin cytoskeleton organization"/>
    <property type="evidence" value="ECO:0000250"/>
    <property type="project" value="UniProtKB"/>
</dbReference>
<dbReference type="GO" id="GO:0086067">
    <property type="term" value="P:AV node cell to bundle of His cell communication"/>
    <property type="evidence" value="ECO:0000250"/>
    <property type="project" value="UniProtKB"/>
</dbReference>
<dbReference type="GO" id="GO:0086072">
    <property type="term" value="P:AV node cell-bundle of His cell adhesion involved in cell communication"/>
    <property type="evidence" value="ECO:0000266"/>
    <property type="project" value="RGD"/>
</dbReference>
<dbReference type="GO" id="GO:0055013">
    <property type="term" value="P:cardiac muscle cell development"/>
    <property type="evidence" value="ECO:0000250"/>
    <property type="project" value="UniProtKB"/>
</dbReference>
<dbReference type="GO" id="GO:0060038">
    <property type="term" value="P:cardiac muscle cell proliferation"/>
    <property type="evidence" value="ECO:0000266"/>
    <property type="project" value="RGD"/>
</dbReference>
<dbReference type="GO" id="GO:0098609">
    <property type="term" value="P:cell-cell adhesion"/>
    <property type="evidence" value="ECO:0000266"/>
    <property type="project" value="RGD"/>
</dbReference>
<dbReference type="GO" id="GO:0045216">
    <property type="term" value="P:cell-cell junction organization"/>
    <property type="evidence" value="ECO:0000250"/>
    <property type="project" value="UniProtKB"/>
</dbReference>
<dbReference type="GO" id="GO:0051607">
    <property type="term" value="P:defense response to virus"/>
    <property type="evidence" value="ECO:0000266"/>
    <property type="project" value="RGD"/>
</dbReference>
<dbReference type="GO" id="GO:0010669">
    <property type="term" value="P:epithelial structure maintenance"/>
    <property type="evidence" value="ECO:0000250"/>
    <property type="project" value="UniProtKB"/>
</dbReference>
<dbReference type="GO" id="GO:0046629">
    <property type="term" value="P:gamma-delta T cell activation"/>
    <property type="evidence" value="ECO:0000250"/>
    <property type="project" value="UniProtKB"/>
</dbReference>
<dbReference type="GO" id="GO:0008354">
    <property type="term" value="P:germ cell migration"/>
    <property type="evidence" value="ECO:0000250"/>
    <property type="project" value="UniProtKB"/>
</dbReference>
<dbReference type="GO" id="GO:0007507">
    <property type="term" value="P:heart development"/>
    <property type="evidence" value="ECO:0000250"/>
    <property type="project" value="UniProtKB"/>
</dbReference>
<dbReference type="GO" id="GO:0007157">
    <property type="term" value="P:heterophilic cell-cell adhesion via plasma membrane cell adhesion molecules"/>
    <property type="evidence" value="ECO:0000250"/>
    <property type="project" value="UniProtKB"/>
</dbReference>
<dbReference type="GO" id="GO:0034109">
    <property type="term" value="P:homotypic cell-cell adhesion"/>
    <property type="evidence" value="ECO:0000250"/>
    <property type="project" value="UniProtKB"/>
</dbReference>
<dbReference type="GO" id="GO:0007005">
    <property type="term" value="P:mitochondrion organization"/>
    <property type="evidence" value="ECO:0000250"/>
    <property type="project" value="UniProtKB"/>
</dbReference>
<dbReference type="GO" id="GO:0060044">
    <property type="term" value="P:negative regulation of cardiac muscle cell proliferation"/>
    <property type="evidence" value="ECO:0000266"/>
    <property type="project" value="RGD"/>
</dbReference>
<dbReference type="GO" id="GO:0030593">
    <property type="term" value="P:neutrophil chemotaxis"/>
    <property type="evidence" value="ECO:0000250"/>
    <property type="project" value="UniProtKB"/>
</dbReference>
<dbReference type="GO" id="GO:0098904">
    <property type="term" value="P:regulation of AV node cell action potential"/>
    <property type="evidence" value="ECO:0000266"/>
    <property type="project" value="RGD"/>
</dbReference>
<dbReference type="GO" id="GO:1900242">
    <property type="term" value="P:regulation of synaptic vesicle endocytosis"/>
    <property type="evidence" value="ECO:0000266"/>
    <property type="project" value="RGD"/>
</dbReference>
<dbReference type="GO" id="GO:0070633">
    <property type="term" value="P:transepithelial transport"/>
    <property type="evidence" value="ECO:0000266"/>
    <property type="project" value="RGD"/>
</dbReference>
<dbReference type="CDD" id="cd20960">
    <property type="entry name" value="IgV_CAR_like"/>
    <property type="match status" value="1"/>
</dbReference>
<dbReference type="CDD" id="cd12087">
    <property type="entry name" value="TM_EGFR-like"/>
    <property type="match status" value="1"/>
</dbReference>
<dbReference type="FunFam" id="2.60.40.10:FF:000493">
    <property type="entry name" value="Coxsackievirus and adenovirus receptor homolog"/>
    <property type="match status" value="1"/>
</dbReference>
<dbReference type="FunFam" id="2.60.40.10:FF:000095">
    <property type="entry name" value="immunoglobulin superfamily member 11 isoform X1"/>
    <property type="match status" value="1"/>
</dbReference>
<dbReference type="Gene3D" id="2.60.40.10">
    <property type="entry name" value="Immunoglobulins"/>
    <property type="match status" value="2"/>
</dbReference>
<dbReference type="InterPro" id="IPR052307">
    <property type="entry name" value="EJ_Adhesion_Regulator"/>
</dbReference>
<dbReference type="InterPro" id="IPR007110">
    <property type="entry name" value="Ig-like_dom"/>
</dbReference>
<dbReference type="InterPro" id="IPR036179">
    <property type="entry name" value="Ig-like_dom_sf"/>
</dbReference>
<dbReference type="InterPro" id="IPR013783">
    <property type="entry name" value="Ig-like_fold"/>
</dbReference>
<dbReference type="InterPro" id="IPR003599">
    <property type="entry name" value="Ig_sub"/>
</dbReference>
<dbReference type="InterPro" id="IPR003598">
    <property type="entry name" value="Ig_sub2"/>
</dbReference>
<dbReference type="InterPro" id="IPR013106">
    <property type="entry name" value="Ig_V-set"/>
</dbReference>
<dbReference type="PANTHER" id="PTHR44468:SF3">
    <property type="entry name" value="COXSACKIEVIRUS AND ADENOVIRUS RECEPTOR"/>
    <property type="match status" value="1"/>
</dbReference>
<dbReference type="PANTHER" id="PTHR44468">
    <property type="entry name" value="COXSACKIEVIRUS AND ADENOVIRUS RECEPTOR-RELATED"/>
    <property type="match status" value="1"/>
</dbReference>
<dbReference type="Pfam" id="PF13895">
    <property type="entry name" value="Ig_2"/>
    <property type="match status" value="1"/>
</dbReference>
<dbReference type="Pfam" id="PF07686">
    <property type="entry name" value="V-set"/>
    <property type="match status" value="1"/>
</dbReference>
<dbReference type="SMART" id="SM00409">
    <property type="entry name" value="IG"/>
    <property type="match status" value="2"/>
</dbReference>
<dbReference type="SMART" id="SM00408">
    <property type="entry name" value="IGc2"/>
    <property type="match status" value="2"/>
</dbReference>
<dbReference type="SMART" id="SM00406">
    <property type="entry name" value="IGv"/>
    <property type="match status" value="1"/>
</dbReference>
<dbReference type="SUPFAM" id="SSF48726">
    <property type="entry name" value="Immunoglobulin"/>
    <property type="match status" value="2"/>
</dbReference>
<dbReference type="PROSITE" id="PS50835">
    <property type="entry name" value="IG_LIKE"/>
    <property type="match status" value="2"/>
</dbReference>
<sequence>MALLLCFVLLCGVADFTSSLSITTPEQRIEKAKGETAYLPCKFTLEPEDQGPLDIEWLISPSDNQKVDQVIILYSGDKIYDNYYPDLKGRVHFTSNDVKSGDASINVTNLQLSDIGTYQCKVKKAPGVANRKFLLTVLVKPSGTRCFVDGSGEIGNDFKLKCEPKEGSLPLQYEWQKLSDSQKMPTPWLAEMTSPVISVKNASSEYSGTYSCTVQNRVGSDQCMLRLDVVPPSNRAGTIAGAVIGTLLALVLIGAILFCCHKKRREEKYEKEVHHDIREDVPPPKSRTSTARSYIGSNHSSLGSMSPSNMEGYSKTQYNQVPSEDFERAPQSPTLAPAKVAAPNLSRMGAVPVMIPAQSKDGSIV</sequence>
<name>CXAR_RAT</name>
<proteinExistence type="evidence at protein level"/>
<comment type="function">
    <text evidence="1">Component of the epithelial apical junction complex that may function as a homophilic cell adhesion molecule and is essential for tight junction integrity. Also involved in transepithelial migration of leukocytes through adhesive interactions with JAML a transmembrane protein of the plasma membrane of leukocytes. The interaction between both receptors also mediates the activation of gamma-delta T-cells, a subpopulation of T-cells residing in epithelia and involved in tissue homeostasis and repair. Upon epithelial CXADR-binding, JAML induces downstream cell signaling events in gamma-delta T-cells through PI3-kinase and MAP kinases. It results in proliferation and production of cytokines and growth factors by T-cells that in turn stimulate epithelial tissues repair (By similarity).</text>
</comment>
<comment type="subunit">
    <text evidence="1">Monomer. May form homodimer. Interacts with LNX, MAGI1, DLG4, PRKCABP, TJP1 and CTNNB1. Interacts with MPDZ; recruits MPDZ to intercellular contact sites. Interacts with JAML (homodimeric form) (By similarity).</text>
</comment>
<comment type="subcellular location">
    <subcellularLocation>
        <location evidence="2">Cell membrane</location>
        <topology evidence="4">Single-pass type I membrane protein</topology>
    </subcellularLocation>
    <subcellularLocation>
        <location evidence="2">Basolateral cell membrane</location>
        <topology evidence="4">Single-pass type I membrane protein</topology>
    </subcellularLocation>
    <subcellularLocation>
        <location evidence="2">Cell junction</location>
        <location evidence="2">Tight junction</location>
    </subcellularLocation>
    <subcellularLocation>
        <location evidence="2">Cell junction</location>
        <location evidence="2">Adherens junction</location>
    </subcellularLocation>
    <text evidence="2">In epithelial cells localizes to the apical junction complex composed of tight and adherens junctions. In airway epithelial cells localized to basolateral membrane but not to apical surface.</text>
</comment>
<comment type="alternative products">
    <event type="alternative splicing"/>
    <isoform>
        <id>Q9R066-1</id>
        <name>1</name>
        <sequence type="displayed"/>
    </isoform>
    <isoform>
        <id>Q9R066-2</id>
        <name>2</name>
        <sequence type="described" ref="VSP_014815 VSP_014816"/>
    </isoform>
</comment>
<comment type="tissue specificity">
    <text evidence="7">Expressed in heart, brain, spleen, lung, liver, muscle, kidney, testis, spleen and skeletal muscle.</text>
</comment>
<comment type="domain">
    <text evidence="1">The Ig-like C2-type 1 domain mediates homodimerization and interaction with JAML.</text>
</comment>
<comment type="domain">
    <text evidence="1">The PDZ-binding motif mediates interaction with MPDZ and MAGI1.</text>
</comment>
<comment type="PTM">
    <text evidence="1">N-glycosylated.</text>
</comment>
<comment type="PTM">
    <text evidence="1">Palmitoylated on Cys-259 and/or Cys-260; required for proper localization to the plasma membrane.</text>
</comment>
<keyword id="KW-0025">Alternative splicing</keyword>
<keyword id="KW-0130">Cell adhesion</keyword>
<keyword id="KW-0965">Cell junction</keyword>
<keyword id="KW-1003">Cell membrane</keyword>
<keyword id="KW-1015">Disulfide bond</keyword>
<keyword id="KW-0325">Glycoprotein</keyword>
<keyword id="KW-0393">Immunoglobulin domain</keyword>
<keyword id="KW-0449">Lipoprotein</keyword>
<keyword id="KW-0472">Membrane</keyword>
<keyword id="KW-0564">Palmitate</keyword>
<keyword id="KW-0597">Phosphoprotein</keyword>
<keyword id="KW-0675">Receptor</keyword>
<keyword id="KW-1185">Reference proteome</keyword>
<keyword id="KW-0677">Repeat</keyword>
<keyword id="KW-0732">Signal</keyword>
<keyword id="KW-0796">Tight junction</keyword>
<keyword id="KW-0812">Transmembrane</keyword>
<keyword id="KW-1133">Transmembrane helix</keyword>
<organism>
    <name type="scientific">Rattus norvegicus</name>
    <name type="common">Rat</name>
    <dbReference type="NCBI Taxonomy" id="10116"/>
    <lineage>
        <taxon>Eukaryota</taxon>
        <taxon>Metazoa</taxon>
        <taxon>Chordata</taxon>
        <taxon>Craniata</taxon>
        <taxon>Vertebrata</taxon>
        <taxon>Euteleostomi</taxon>
        <taxon>Mammalia</taxon>
        <taxon>Eutheria</taxon>
        <taxon>Euarchontoglires</taxon>
        <taxon>Glires</taxon>
        <taxon>Rodentia</taxon>
        <taxon>Myomorpha</taxon>
        <taxon>Muroidea</taxon>
        <taxon>Muridae</taxon>
        <taxon>Murinae</taxon>
        <taxon>Rattus</taxon>
    </lineage>
</organism>
<reference key="1">
    <citation type="journal article" date="2004" name="Nature">
        <title>Genome sequence of the Brown Norway rat yields insights into mammalian evolution.</title>
        <authorList>
            <person name="Gibbs R.A."/>
            <person name="Weinstock G.M."/>
            <person name="Metzker M.L."/>
            <person name="Muzny D.M."/>
            <person name="Sodergren E.J."/>
            <person name="Scherer S."/>
            <person name="Scott G."/>
            <person name="Steffen D."/>
            <person name="Worley K.C."/>
            <person name="Burch P.E."/>
            <person name="Okwuonu G."/>
            <person name="Hines S."/>
            <person name="Lewis L."/>
            <person name="Deramo C."/>
            <person name="Delgado O."/>
            <person name="Dugan-Rocha S."/>
            <person name="Miner G."/>
            <person name="Morgan M."/>
            <person name="Hawes A."/>
            <person name="Gill R."/>
            <person name="Holt R.A."/>
            <person name="Adams M.D."/>
            <person name="Amanatides P.G."/>
            <person name="Baden-Tillson H."/>
            <person name="Barnstead M."/>
            <person name="Chin S."/>
            <person name="Evans C.A."/>
            <person name="Ferriera S."/>
            <person name="Fosler C."/>
            <person name="Glodek A."/>
            <person name="Gu Z."/>
            <person name="Jennings D."/>
            <person name="Kraft C.L."/>
            <person name="Nguyen T."/>
            <person name="Pfannkoch C.M."/>
            <person name="Sitter C."/>
            <person name="Sutton G.G."/>
            <person name="Venter J.C."/>
            <person name="Woodage T."/>
            <person name="Smith D."/>
            <person name="Lee H.-M."/>
            <person name="Gustafson E."/>
            <person name="Cahill P."/>
            <person name="Kana A."/>
            <person name="Doucette-Stamm L."/>
            <person name="Weinstock K."/>
            <person name="Fechtel K."/>
            <person name="Weiss R.B."/>
            <person name="Dunn D.M."/>
            <person name="Green E.D."/>
            <person name="Blakesley R.W."/>
            <person name="Bouffard G.G."/>
            <person name="De Jong P.J."/>
            <person name="Osoegawa K."/>
            <person name="Zhu B."/>
            <person name="Marra M."/>
            <person name="Schein J."/>
            <person name="Bosdet I."/>
            <person name="Fjell C."/>
            <person name="Jones S."/>
            <person name="Krzywinski M."/>
            <person name="Mathewson C."/>
            <person name="Siddiqui A."/>
            <person name="Wye N."/>
            <person name="McPherson J."/>
            <person name="Zhao S."/>
            <person name="Fraser C.M."/>
            <person name="Shetty J."/>
            <person name="Shatsman S."/>
            <person name="Geer K."/>
            <person name="Chen Y."/>
            <person name="Abramzon S."/>
            <person name="Nierman W.C."/>
            <person name="Havlak P.H."/>
            <person name="Chen R."/>
            <person name="Durbin K.J."/>
            <person name="Egan A."/>
            <person name="Ren Y."/>
            <person name="Song X.-Z."/>
            <person name="Li B."/>
            <person name="Liu Y."/>
            <person name="Qin X."/>
            <person name="Cawley S."/>
            <person name="Cooney A.J."/>
            <person name="D'Souza L.M."/>
            <person name="Martin K."/>
            <person name="Wu J.Q."/>
            <person name="Gonzalez-Garay M.L."/>
            <person name="Jackson A.R."/>
            <person name="Kalafus K.J."/>
            <person name="McLeod M.P."/>
            <person name="Milosavljevic A."/>
            <person name="Virk D."/>
            <person name="Volkov A."/>
            <person name="Wheeler D.A."/>
            <person name="Zhang Z."/>
            <person name="Bailey J.A."/>
            <person name="Eichler E.E."/>
            <person name="Tuzun E."/>
            <person name="Birney E."/>
            <person name="Mongin E."/>
            <person name="Ureta-Vidal A."/>
            <person name="Woodwark C."/>
            <person name="Zdobnov E."/>
            <person name="Bork P."/>
            <person name="Suyama M."/>
            <person name="Torrents D."/>
            <person name="Alexandersson M."/>
            <person name="Trask B.J."/>
            <person name="Young J.M."/>
            <person name="Huang H."/>
            <person name="Wang H."/>
            <person name="Xing H."/>
            <person name="Daniels S."/>
            <person name="Gietzen D."/>
            <person name="Schmidt J."/>
            <person name="Stevens K."/>
            <person name="Vitt U."/>
            <person name="Wingrove J."/>
            <person name="Camara F."/>
            <person name="Mar Alba M."/>
            <person name="Abril J.F."/>
            <person name="Guigo R."/>
            <person name="Smit A."/>
            <person name="Dubchak I."/>
            <person name="Rubin E.M."/>
            <person name="Couronne O."/>
            <person name="Poliakov A."/>
            <person name="Huebner N."/>
            <person name="Ganten D."/>
            <person name="Goesele C."/>
            <person name="Hummel O."/>
            <person name="Kreitler T."/>
            <person name="Lee Y.-A."/>
            <person name="Monti J."/>
            <person name="Schulz H."/>
            <person name="Zimdahl H."/>
            <person name="Himmelbauer H."/>
            <person name="Lehrach H."/>
            <person name="Jacob H.J."/>
            <person name="Bromberg S."/>
            <person name="Gullings-Handley J."/>
            <person name="Jensen-Seaman M.I."/>
            <person name="Kwitek A.E."/>
            <person name="Lazar J."/>
            <person name="Pasko D."/>
            <person name="Tonellato P.J."/>
            <person name="Twigger S."/>
            <person name="Ponting C.P."/>
            <person name="Duarte J.M."/>
            <person name="Rice S."/>
            <person name="Goodstadt L."/>
            <person name="Beatson S.A."/>
            <person name="Emes R.D."/>
            <person name="Winter E.E."/>
            <person name="Webber C."/>
            <person name="Brandt P."/>
            <person name="Nyakatura G."/>
            <person name="Adetobi M."/>
            <person name="Chiaromonte F."/>
            <person name="Elnitski L."/>
            <person name="Eswara P."/>
            <person name="Hardison R.C."/>
            <person name="Hou M."/>
            <person name="Kolbe D."/>
            <person name="Makova K."/>
            <person name="Miller W."/>
            <person name="Nekrutenko A."/>
            <person name="Riemer C."/>
            <person name="Schwartz S."/>
            <person name="Taylor J."/>
            <person name="Yang S."/>
            <person name="Zhang Y."/>
            <person name="Lindpaintner K."/>
            <person name="Andrews T.D."/>
            <person name="Caccamo M."/>
            <person name="Clamp M."/>
            <person name="Clarke L."/>
            <person name="Curwen V."/>
            <person name="Durbin R.M."/>
            <person name="Eyras E."/>
            <person name="Searle S.M."/>
            <person name="Cooper G.M."/>
            <person name="Batzoglou S."/>
            <person name="Brudno M."/>
            <person name="Sidow A."/>
            <person name="Stone E.A."/>
            <person name="Payseur B.A."/>
            <person name="Bourque G."/>
            <person name="Lopez-Otin C."/>
            <person name="Puente X.S."/>
            <person name="Chakrabarti K."/>
            <person name="Chatterji S."/>
            <person name="Dewey C."/>
            <person name="Pachter L."/>
            <person name="Bray N."/>
            <person name="Yap V.B."/>
            <person name="Caspi A."/>
            <person name="Tesler G."/>
            <person name="Pevzner P.A."/>
            <person name="Haussler D."/>
            <person name="Roskin K.M."/>
            <person name="Baertsch R."/>
            <person name="Clawson H."/>
            <person name="Furey T.S."/>
            <person name="Hinrichs A.S."/>
            <person name="Karolchik D."/>
            <person name="Kent W.J."/>
            <person name="Rosenbloom K.R."/>
            <person name="Trumbower H."/>
            <person name="Weirauch M."/>
            <person name="Cooper D.N."/>
            <person name="Stenson P.D."/>
            <person name="Ma B."/>
            <person name="Brent M."/>
            <person name="Arumugam M."/>
            <person name="Shteynberg D."/>
            <person name="Copley R.R."/>
            <person name="Taylor M.S."/>
            <person name="Riethman H."/>
            <person name="Mudunuri U."/>
            <person name="Peterson J."/>
            <person name="Guyer M."/>
            <person name="Felsenfeld A."/>
            <person name="Old S."/>
            <person name="Mockrin S."/>
            <person name="Collins F.S."/>
        </authorList>
    </citation>
    <scope>NUCLEOTIDE SEQUENCE [LARGE SCALE GENOMIC DNA]</scope>
    <source>
        <strain>Brown Norway</strain>
    </source>
</reference>
<reference key="2">
    <citation type="journal article" date="1999" name="Gene Ther.">
        <title>Expression of Coxsackie-adenovirus-receptor and alpha v-integrin does not correlate with adenovector targeting in vivo indicating anatomical vector barriers.</title>
        <authorList>
            <person name="Fechner H."/>
            <person name="Haack A."/>
            <person name="Wang H."/>
            <person name="Wang X."/>
            <person name="Eizema K."/>
            <person name="Pauschinger M."/>
            <person name="Schoemaker R.G."/>
            <person name="van Veghel R."/>
            <person name="Houtsmuller A.B."/>
            <person name="Schultheiss H.-P."/>
            <person name="Lamers J.M.J."/>
            <person name="Poller W."/>
        </authorList>
    </citation>
    <scope>NUCLEOTIDE SEQUENCE [MRNA] OF 1-358 (ISOFORM 1)</scope>
    <scope>PARTIAL NUCLEOTIDE SEQUENCE [MRNA] (ISOFORM 2)</scope>
    <scope>TISSUE SPECIFICITY</scope>
    <source>
        <strain>Wistar</strain>
        <tissue>Liver</tissue>
    </source>
</reference>
<reference key="3">
    <citation type="journal article" date="2004" name="Genome Res.">
        <title>The status, quality, and expansion of the NIH full-length cDNA project: the Mammalian Gene Collection (MGC).</title>
        <authorList>
            <consortium name="The MGC Project Team"/>
        </authorList>
    </citation>
    <scope>PARTIAL NUCLEOTIDE SEQUENCE [LARGE SCALE MRNA] (ISOFORM 2)</scope>
    <source>
        <tissue>Liver</tissue>
    </source>
</reference>
<reference key="4">
    <citation type="journal article" date="2012" name="Nat. Commun.">
        <title>Quantitative maps of protein phosphorylation sites across 14 different rat organs and tissues.</title>
        <authorList>
            <person name="Lundby A."/>
            <person name="Secher A."/>
            <person name="Lage K."/>
            <person name="Nordsborg N.B."/>
            <person name="Dmytriyev A."/>
            <person name="Lundby C."/>
            <person name="Olsen J.V."/>
        </authorList>
    </citation>
    <scope>PHOSPHORYLATION [LARGE SCALE ANALYSIS] AT SER-323 AND SER-332</scope>
    <scope>IDENTIFICATION BY MASS SPECTROMETRY [LARGE SCALE ANALYSIS]</scope>
</reference>
<protein>
    <recommendedName>
        <fullName>Coxsackievirus and adenovirus receptor homolog</fullName>
        <shortName>CAR</shortName>
        <shortName>rCAR</shortName>
    </recommendedName>
</protein>